<sequence>MNAYQKTIGRAVTLSGVGIHGGAPASARLLPADADTGILFQRSDIKDSAPVCAHVSQIGATDLCTSLGAREARIDTVEHLMAAISALGIDNLVVEIEGPEVPILDGTSARFIEAVDSVGVVTQDAKRRFIRILKTVRVEAGNSWGEFRPYDGTRFEVEIDFECPLIGRQKFAHDVDEETFRKELSTARTFGFMKDVERLWAAGLALGASLDNSLVIGDDNSIVNADGLRFKDEFVRHKTLDAVGDLALAGLPFIGCFSSYRGGHRLNSEAVKALLSDETAFEIIEA</sequence>
<accession>Q8YI59</accession>
<name>LPXC_BRUME</name>
<evidence type="ECO:0000255" key="1">
    <source>
        <dbReference type="HAMAP-Rule" id="MF_00388"/>
    </source>
</evidence>
<comment type="function">
    <text evidence="1">Catalyzes the hydrolysis of UDP-3-O-myristoyl-N-acetylglucosamine to form UDP-3-O-myristoylglucosamine and acetate, the committed step in lipid A biosynthesis.</text>
</comment>
<comment type="catalytic activity">
    <reaction evidence="1">
        <text>a UDP-3-O-[(3R)-3-hydroxyacyl]-N-acetyl-alpha-D-glucosamine + H2O = a UDP-3-O-[(3R)-3-hydroxyacyl]-alpha-D-glucosamine + acetate</text>
        <dbReference type="Rhea" id="RHEA:67816"/>
        <dbReference type="ChEBI" id="CHEBI:15377"/>
        <dbReference type="ChEBI" id="CHEBI:30089"/>
        <dbReference type="ChEBI" id="CHEBI:137740"/>
        <dbReference type="ChEBI" id="CHEBI:173225"/>
        <dbReference type="EC" id="3.5.1.108"/>
    </reaction>
</comment>
<comment type="cofactor">
    <cofactor evidence="1">
        <name>Zn(2+)</name>
        <dbReference type="ChEBI" id="CHEBI:29105"/>
    </cofactor>
</comment>
<comment type="pathway">
    <text evidence="1">Glycolipid biosynthesis; lipid IV(A) biosynthesis; lipid IV(A) from (3R)-3-hydroxytetradecanoyl-[acyl-carrier-protein] and UDP-N-acetyl-alpha-D-glucosamine: step 2/6.</text>
</comment>
<comment type="similarity">
    <text evidence="1">Belongs to the LpxC family.</text>
</comment>
<protein>
    <recommendedName>
        <fullName evidence="1">UDP-3-O-acyl-N-acetylglucosamine deacetylase</fullName>
        <shortName evidence="1">UDP-3-O-acyl-GlcNAc deacetylase</shortName>
        <ecNumber evidence="1">3.5.1.108</ecNumber>
    </recommendedName>
    <alternativeName>
        <fullName evidence="1">UDP-3-O-[R-3-hydroxymyristoyl]-N-acetylglucosamine deacetylase</fullName>
    </alternativeName>
</protein>
<organism>
    <name type="scientific">Brucella melitensis biotype 1 (strain ATCC 23456 / CCUG 17765 / NCTC 10094 / 16M)</name>
    <dbReference type="NCBI Taxonomy" id="224914"/>
    <lineage>
        <taxon>Bacteria</taxon>
        <taxon>Pseudomonadati</taxon>
        <taxon>Pseudomonadota</taxon>
        <taxon>Alphaproteobacteria</taxon>
        <taxon>Hyphomicrobiales</taxon>
        <taxon>Brucellaceae</taxon>
        <taxon>Brucella/Ochrobactrum group</taxon>
        <taxon>Brucella</taxon>
    </lineage>
</organism>
<feature type="chain" id="PRO_0000191919" description="UDP-3-O-acyl-N-acetylglucosamine deacetylase">
    <location>
        <begin position="1"/>
        <end position="286"/>
    </location>
</feature>
<feature type="active site" description="Proton donor" evidence="1">
    <location>
        <position position="264"/>
    </location>
</feature>
<feature type="binding site" evidence="1">
    <location>
        <position position="79"/>
    </location>
    <ligand>
        <name>Zn(2+)</name>
        <dbReference type="ChEBI" id="CHEBI:29105"/>
    </ligand>
</feature>
<feature type="binding site" evidence="1">
    <location>
        <position position="237"/>
    </location>
    <ligand>
        <name>Zn(2+)</name>
        <dbReference type="ChEBI" id="CHEBI:29105"/>
    </ligand>
</feature>
<feature type="binding site" evidence="1">
    <location>
        <position position="241"/>
    </location>
    <ligand>
        <name>Zn(2+)</name>
        <dbReference type="ChEBI" id="CHEBI:29105"/>
    </ligand>
</feature>
<dbReference type="EC" id="3.5.1.108" evidence="1"/>
<dbReference type="EMBL" id="AE008917">
    <property type="protein sequence ID" value="AAL51767.1"/>
    <property type="molecule type" value="Genomic_DNA"/>
</dbReference>
<dbReference type="PIR" id="AD3325">
    <property type="entry name" value="AD3325"/>
</dbReference>
<dbReference type="RefSeq" id="WP_004684016.1">
    <property type="nucleotide sequence ID" value="NZ_GG703780.1"/>
</dbReference>
<dbReference type="SMR" id="Q8YI59"/>
<dbReference type="GeneID" id="29593377"/>
<dbReference type="KEGG" id="bme:BMEI0586"/>
<dbReference type="KEGG" id="bmel:DK63_840"/>
<dbReference type="PATRIC" id="fig|224914.52.peg.882"/>
<dbReference type="eggNOG" id="COG0774">
    <property type="taxonomic scope" value="Bacteria"/>
</dbReference>
<dbReference type="PhylomeDB" id="Q8YI59"/>
<dbReference type="UniPathway" id="UPA00359">
    <property type="reaction ID" value="UER00478"/>
</dbReference>
<dbReference type="Proteomes" id="UP000000419">
    <property type="component" value="Chromosome I"/>
</dbReference>
<dbReference type="GO" id="GO:0016020">
    <property type="term" value="C:membrane"/>
    <property type="evidence" value="ECO:0007669"/>
    <property type="project" value="GOC"/>
</dbReference>
<dbReference type="GO" id="GO:0046872">
    <property type="term" value="F:metal ion binding"/>
    <property type="evidence" value="ECO:0007669"/>
    <property type="project" value="UniProtKB-KW"/>
</dbReference>
<dbReference type="GO" id="GO:0103117">
    <property type="term" value="F:UDP-3-O-acyl-N-acetylglucosamine deacetylase activity"/>
    <property type="evidence" value="ECO:0007669"/>
    <property type="project" value="UniProtKB-UniRule"/>
</dbReference>
<dbReference type="GO" id="GO:0009245">
    <property type="term" value="P:lipid A biosynthetic process"/>
    <property type="evidence" value="ECO:0007669"/>
    <property type="project" value="UniProtKB-UniRule"/>
</dbReference>
<dbReference type="Gene3D" id="3.30.230.20">
    <property type="entry name" value="lpxc deacetylase, domain 1"/>
    <property type="match status" value="1"/>
</dbReference>
<dbReference type="Gene3D" id="3.30.1700.10">
    <property type="entry name" value="lpxc deacetylase, domain 2"/>
    <property type="match status" value="1"/>
</dbReference>
<dbReference type="HAMAP" id="MF_00388">
    <property type="entry name" value="LpxC"/>
    <property type="match status" value="1"/>
</dbReference>
<dbReference type="InterPro" id="IPR020568">
    <property type="entry name" value="Ribosomal_Su5_D2-typ_SF"/>
</dbReference>
<dbReference type="InterPro" id="IPR004463">
    <property type="entry name" value="UDP-acyl_GlcNac_deAcase"/>
</dbReference>
<dbReference type="InterPro" id="IPR011334">
    <property type="entry name" value="UDP-acyl_GlcNac_deAcase_C"/>
</dbReference>
<dbReference type="InterPro" id="IPR015870">
    <property type="entry name" value="UDP-acyl_N-AcGlcN_deAcase_N"/>
</dbReference>
<dbReference type="NCBIfam" id="TIGR00325">
    <property type="entry name" value="lpxC"/>
    <property type="match status" value="1"/>
</dbReference>
<dbReference type="PANTHER" id="PTHR33694">
    <property type="entry name" value="UDP-3-O-ACYL-N-ACETYLGLUCOSAMINE DEACETYLASE 1, MITOCHONDRIAL-RELATED"/>
    <property type="match status" value="1"/>
</dbReference>
<dbReference type="PANTHER" id="PTHR33694:SF1">
    <property type="entry name" value="UDP-3-O-ACYL-N-ACETYLGLUCOSAMINE DEACETYLASE 1, MITOCHONDRIAL-RELATED"/>
    <property type="match status" value="1"/>
</dbReference>
<dbReference type="Pfam" id="PF03331">
    <property type="entry name" value="LpxC"/>
    <property type="match status" value="1"/>
</dbReference>
<dbReference type="SUPFAM" id="SSF54211">
    <property type="entry name" value="Ribosomal protein S5 domain 2-like"/>
    <property type="match status" value="2"/>
</dbReference>
<reference key="1">
    <citation type="journal article" date="2002" name="Proc. Natl. Acad. Sci. U.S.A.">
        <title>The genome sequence of the facultative intracellular pathogen Brucella melitensis.</title>
        <authorList>
            <person name="DelVecchio V.G."/>
            <person name="Kapatral V."/>
            <person name="Redkar R.J."/>
            <person name="Patra G."/>
            <person name="Mujer C."/>
            <person name="Los T."/>
            <person name="Ivanova N."/>
            <person name="Anderson I."/>
            <person name="Bhattacharyya A."/>
            <person name="Lykidis A."/>
            <person name="Reznik G."/>
            <person name="Jablonski L."/>
            <person name="Larsen N."/>
            <person name="D'Souza M."/>
            <person name="Bernal A."/>
            <person name="Mazur M."/>
            <person name="Goltsman E."/>
            <person name="Selkov E."/>
            <person name="Elzer P.H."/>
            <person name="Hagius S."/>
            <person name="O'Callaghan D."/>
            <person name="Letesson J.-J."/>
            <person name="Haselkorn R."/>
            <person name="Kyrpides N.C."/>
            <person name="Overbeek R."/>
        </authorList>
    </citation>
    <scope>NUCLEOTIDE SEQUENCE [LARGE SCALE GENOMIC DNA]</scope>
    <source>
        <strain>ATCC 23456 / CCUG 17765 / NCTC 10094 / 16M</strain>
    </source>
</reference>
<keyword id="KW-0378">Hydrolase</keyword>
<keyword id="KW-0441">Lipid A biosynthesis</keyword>
<keyword id="KW-0444">Lipid biosynthesis</keyword>
<keyword id="KW-0443">Lipid metabolism</keyword>
<keyword id="KW-0479">Metal-binding</keyword>
<keyword id="KW-0862">Zinc</keyword>
<proteinExistence type="inferred from homology"/>
<gene>
    <name evidence="1" type="primary">lpxC</name>
    <name type="ordered locus">BMEI0586</name>
</gene>